<keyword id="KW-0678">Repressor</keyword>
<keyword id="KW-0346">Stress response</keyword>
<keyword id="KW-0804">Transcription</keyword>
<keyword id="KW-0805">Transcription regulation</keyword>
<gene>
    <name evidence="1" type="primary">hrcA</name>
    <name type="ordered locus">Cagg_2696</name>
</gene>
<protein>
    <recommendedName>
        <fullName evidence="1">Heat-inducible transcription repressor HrcA</fullName>
    </recommendedName>
</protein>
<dbReference type="EMBL" id="CP001337">
    <property type="protein sequence ID" value="ACL25564.1"/>
    <property type="molecule type" value="Genomic_DNA"/>
</dbReference>
<dbReference type="RefSeq" id="WP_015941421.1">
    <property type="nucleotide sequence ID" value="NC_011831.1"/>
</dbReference>
<dbReference type="SMR" id="B8G4T8"/>
<dbReference type="STRING" id="326427.Cagg_2696"/>
<dbReference type="KEGG" id="cag:Cagg_2696"/>
<dbReference type="eggNOG" id="COG1420">
    <property type="taxonomic scope" value="Bacteria"/>
</dbReference>
<dbReference type="HOGENOM" id="CLU_050019_1_0_0"/>
<dbReference type="OrthoDB" id="9783139at2"/>
<dbReference type="Proteomes" id="UP000002508">
    <property type="component" value="Chromosome"/>
</dbReference>
<dbReference type="GO" id="GO:0003677">
    <property type="term" value="F:DNA binding"/>
    <property type="evidence" value="ECO:0007669"/>
    <property type="project" value="InterPro"/>
</dbReference>
<dbReference type="GO" id="GO:0045892">
    <property type="term" value="P:negative regulation of DNA-templated transcription"/>
    <property type="evidence" value="ECO:0007669"/>
    <property type="project" value="UniProtKB-UniRule"/>
</dbReference>
<dbReference type="Gene3D" id="3.30.450.40">
    <property type="match status" value="1"/>
</dbReference>
<dbReference type="Gene3D" id="1.10.10.10">
    <property type="entry name" value="Winged helix-like DNA-binding domain superfamily/Winged helix DNA-binding domain"/>
    <property type="match status" value="1"/>
</dbReference>
<dbReference type="HAMAP" id="MF_00081">
    <property type="entry name" value="HrcA"/>
    <property type="match status" value="1"/>
</dbReference>
<dbReference type="InterPro" id="IPR029016">
    <property type="entry name" value="GAF-like_dom_sf"/>
</dbReference>
<dbReference type="InterPro" id="IPR002571">
    <property type="entry name" value="HrcA"/>
</dbReference>
<dbReference type="InterPro" id="IPR021153">
    <property type="entry name" value="HrcA_C"/>
</dbReference>
<dbReference type="InterPro" id="IPR036388">
    <property type="entry name" value="WH-like_DNA-bd_sf"/>
</dbReference>
<dbReference type="InterPro" id="IPR036390">
    <property type="entry name" value="WH_DNA-bd_sf"/>
</dbReference>
<dbReference type="NCBIfam" id="TIGR00331">
    <property type="entry name" value="hrcA"/>
    <property type="match status" value="1"/>
</dbReference>
<dbReference type="PANTHER" id="PTHR34824">
    <property type="entry name" value="HEAT-INDUCIBLE TRANSCRIPTION REPRESSOR HRCA"/>
    <property type="match status" value="1"/>
</dbReference>
<dbReference type="PANTHER" id="PTHR34824:SF1">
    <property type="entry name" value="HEAT-INDUCIBLE TRANSCRIPTION REPRESSOR HRCA"/>
    <property type="match status" value="1"/>
</dbReference>
<dbReference type="Pfam" id="PF01628">
    <property type="entry name" value="HrcA"/>
    <property type="match status" value="1"/>
</dbReference>
<dbReference type="PIRSF" id="PIRSF005485">
    <property type="entry name" value="HrcA"/>
    <property type="match status" value="1"/>
</dbReference>
<dbReference type="SUPFAM" id="SSF55781">
    <property type="entry name" value="GAF domain-like"/>
    <property type="match status" value="1"/>
</dbReference>
<dbReference type="SUPFAM" id="SSF46785">
    <property type="entry name" value="Winged helix' DNA-binding domain"/>
    <property type="match status" value="1"/>
</dbReference>
<organism>
    <name type="scientific">Chloroflexus aggregans (strain MD-66 / DSM 9485)</name>
    <dbReference type="NCBI Taxonomy" id="326427"/>
    <lineage>
        <taxon>Bacteria</taxon>
        <taxon>Bacillati</taxon>
        <taxon>Chloroflexota</taxon>
        <taxon>Chloroflexia</taxon>
        <taxon>Chloroflexales</taxon>
        <taxon>Chloroflexineae</taxon>
        <taxon>Chloroflexaceae</taxon>
        <taxon>Chloroflexus</taxon>
    </lineage>
</organism>
<evidence type="ECO:0000255" key="1">
    <source>
        <dbReference type="HAMAP-Rule" id="MF_00081"/>
    </source>
</evidence>
<name>HRCA_CHLAD</name>
<feature type="chain" id="PRO_1000118294" description="Heat-inducible transcription repressor HrcA">
    <location>
        <begin position="1"/>
        <end position="376"/>
    </location>
</feature>
<reference key="1">
    <citation type="submission" date="2008-12" db="EMBL/GenBank/DDBJ databases">
        <title>Complete sequence of Chloroflexus aggregans DSM 9485.</title>
        <authorList>
            <consortium name="US DOE Joint Genome Institute"/>
            <person name="Lucas S."/>
            <person name="Copeland A."/>
            <person name="Lapidus A."/>
            <person name="Glavina del Rio T."/>
            <person name="Dalin E."/>
            <person name="Tice H."/>
            <person name="Pitluck S."/>
            <person name="Foster B."/>
            <person name="Larimer F."/>
            <person name="Land M."/>
            <person name="Hauser L."/>
            <person name="Kyrpides N."/>
            <person name="Mikhailova N."/>
            <person name="Bryant D.A."/>
            <person name="Richardson P."/>
        </authorList>
    </citation>
    <scope>NUCLEOTIDE SEQUENCE [LARGE SCALE GENOMIC DNA]</scope>
    <source>
        <strain>MD-66 / DSM 9485</strain>
    </source>
</reference>
<sequence>MSGPLTERRQTILKLVIQEFVDTATPVASETLVRKYRLPVSPATVRNDMAALEELGFLTHPHTSGGRIPTDTGYRFFVENLMERTSLSPAEQRMIRHQFYQVRGELDQWVQLACAVLARTAHNASVATAPRAEQLRFKSLELISIHETMALAVIVFHGGIVKQQTLPVEPWRTPEDLRRAAGLVSDLLADATLTRVEELATAATFNGIPLSDFERGLVDLVVRAMIAFEEQAQEQIYSDGLLEMLSQPEFSPASGRDDAERVIERMRRTLEILKSGRGLGPLIPQALASGGVQVIIGGEHGEDTMRDYSVILARYGVEGVIAGVLGVIGPTRMAYPRSISTVRYIASLMNNLLAELYNVQARPSEGESEYKDEQHA</sequence>
<proteinExistence type="inferred from homology"/>
<accession>B8G4T8</accession>
<comment type="function">
    <text evidence="1">Negative regulator of class I heat shock genes (grpE-dnaK-dnaJ and groELS operons). Prevents heat-shock induction of these operons.</text>
</comment>
<comment type="similarity">
    <text evidence="1">Belongs to the HrcA family.</text>
</comment>